<gene>
    <name type="primary">acyP</name>
    <name type="ordered locus">CBUD_2095</name>
</gene>
<sequence>MTQKEKNETCIHATVSGKVQGVFFRESVRKKAEELQLTGWVKNLSHGDVELVACGERDSIMILTEWLWEGPPQAAVSNVNWEEIVVEDYSDFRVR</sequence>
<organism>
    <name type="scientific">Coxiella burnetii (strain Dugway 5J108-111)</name>
    <dbReference type="NCBI Taxonomy" id="434922"/>
    <lineage>
        <taxon>Bacteria</taxon>
        <taxon>Pseudomonadati</taxon>
        <taxon>Pseudomonadota</taxon>
        <taxon>Gammaproteobacteria</taxon>
        <taxon>Legionellales</taxon>
        <taxon>Coxiellaceae</taxon>
        <taxon>Coxiella</taxon>
    </lineage>
</organism>
<evidence type="ECO:0000255" key="1">
    <source>
        <dbReference type="PROSITE-ProRule" id="PRU00520"/>
    </source>
</evidence>
<evidence type="ECO:0000305" key="2"/>
<protein>
    <recommendedName>
        <fullName>Acylphosphatase</fullName>
        <ecNumber>3.6.1.7</ecNumber>
    </recommendedName>
    <alternativeName>
        <fullName>Acylphosphate phosphohydrolase</fullName>
    </alternativeName>
</protein>
<feature type="chain" id="PRO_0000326694" description="Acylphosphatase">
    <location>
        <begin position="1"/>
        <end position="95"/>
    </location>
</feature>
<feature type="domain" description="Acylphosphatase-like" evidence="1">
    <location>
        <begin position="10"/>
        <end position="95"/>
    </location>
</feature>
<feature type="active site" evidence="1">
    <location>
        <position position="25"/>
    </location>
</feature>
<feature type="active site" evidence="1">
    <location>
        <position position="43"/>
    </location>
</feature>
<accession>A9KH12</accession>
<name>ACYP_COXBN</name>
<comment type="catalytic activity">
    <reaction>
        <text>an acyl phosphate + H2O = a carboxylate + phosphate + H(+)</text>
        <dbReference type="Rhea" id="RHEA:14965"/>
        <dbReference type="ChEBI" id="CHEBI:15377"/>
        <dbReference type="ChEBI" id="CHEBI:15378"/>
        <dbReference type="ChEBI" id="CHEBI:29067"/>
        <dbReference type="ChEBI" id="CHEBI:43474"/>
        <dbReference type="ChEBI" id="CHEBI:59918"/>
        <dbReference type="EC" id="3.6.1.7"/>
    </reaction>
</comment>
<comment type="similarity">
    <text evidence="2">Belongs to the acylphosphatase family.</text>
</comment>
<comment type="sequence caution" evidence="2">
    <conflict type="erroneous initiation">
        <sequence resource="EMBL-CDS" id="ABS77322"/>
    </conflict>
</comment>
<dbReference type="EC" id="3.6.1.7"/>
<dbReference type="EMBL" id="CP000733">
    <property type="protein sequence ID" value="ABS77322.2"/>
    <property type="status" value="ALT_INIT"/>
    <property type="molecule type" value="Genomic_DNA"/>
</dbReference>
<dbReference type="RefSeq" id="WP_005769730.1">
    <property type="nucleotide sequence ID" value="NC_009727.1"/>
</dbReference>
<dbReference type="SMR" id="A9KH12"/>
<dbReference type="KEGG" id="cbd:CBUD_2095"/>
<dbReference type="HOGENOM" id="CLU_141932_1_0_6"/>
<dbReference type="Proteomes" id="UP000008555">
    <property type="component" value="Chromosome"/>
</dbReference>
<dbReference type="GO" id="GO:0003998">
    <property type="term" value="F:acylphosphatase activity"/>
    <property type="evidence" value="ECO:0007669"/>
    <property type="project" value="UniProtKB-EC"/>
</dbReference>
<dbReference type="FunFam" id="3.30.70.100:FF:000054">
    <property type="entry name" value="Acylphosphatase"/>
    <property type="match status" value="1"/>
</dbReference>
<dbReference type="Gene3D" id="3.30.70.100">
    <property type="match status" value="1"/>
</dbReference>
<dbReference type="InterPro" id="IPR020456">
    <property type="entry name" value="Acylphosphatase"/>
</dbReference>
<dbReference type="InterPro" id="IPR001792">
    <property type="entry name" value="Acylphosphatase-like_dom"/>
</dbReference>
<dbReference type="InterPro" id="IPR036046">
    <property type="entry name" value="Acylphosphatase-like_dom_sf"/>
</dbReference>
<dbReference type="InterPro" id="IPR017968">
    <property type="entry name" value="Acylphosphatase_CS"/>
</dbReference>
<dbReference type="NCBIfam" id="NF011022">
    <property type="entry name" value="PRK14451.1"/>
    <property type="match status" value="1"/>
</dbReference>
<dbReference type="PANTHER" id="PTHR10029">
    <property type="entry name" value="ACYLPHOSPHATASE"/>
    <property type="match status" value="1"/>
</dbReference>
<dbReference type="PANTHER" id="PTHR10029:SF3">
    <property type="entry name" value="ACYLPHOSPHATASE-RELATED"/>
    <property type="match status" value="1"/>
</dbReference>
<dbReference type="Pfam" id="PF00708">
    <property type="entry name" value="Acylphosphatase"/>
    <property type="match status" value="1"/>
</dbReference>
<dbReference type="PRINTS" id="PR00112">
    <property type="entry name" value="ACYLPHPHTASE"/>
</dbReference>
<dbReference type="SUPFAM" id="SSF54975">
    <property type="entry name" value="Acylphosphatase/BLUF domain-like"/>
    <property type="match status" value="1"/>
</dbReference>
<dbReference type="PROSITE" id="PS00150">
    <property type="entry name" value="ACYLPHOSPHATASE_1"/>
    <property type="match status" value="1"/>
</dbReference>
<dbReference type="PROSITE" id="PS00151">
    <property type="entry name" value="ACYLPHOSPHATASE_2"/>
    <property type="match status" value="1"/>
</dbReference>
<dbReference type="PROSITE" id="PS51160">
    <property type="entry name" value="ACYLPHOSPHATASE_3"/>
    <property type="match status" value="1"/>
</dbReference>
<reference key="1">
    <citation type="journal article" date="2009" name="Infect. Immun.">
        <title>Comparative genomics reveal extensive transposon-mediated genomic plasticity and diversity among potential effector proteins within the genus Coxiella.</title>
        <authorList>
            <person name="Beare P.A."/>
            <person name="Unsworth N."/>
            <person name="Andoh M."/>
            <person name="Voth D.E."/>
            <person name="Omsland A."/>
            <person name="Gilk S.D."/>
            <person name="Williams K.P."/>
            <person name="Sobral B.W."/>
            <person name="Kupko J.J. III"/>
            <person name="Porcella S.F."/>
            <person name="Samuel J.E."/>
            <person name="Heinzen R.A."/>
        </authorList>
    </citation>
    <scope>NUCLEOTIDE SEQUENCE [LARGE SCALE GENOMIC DNA]</scope>
    <source>
        <strain>Dugway 5J108-111</strain>
    </source>
</reference>
<proteinExistence type="inferred from homology"/>
<keyword id="KW-0378">Hydrolase</keyword>